<protein>
    <recommendedName>
        <fullName>N-terminal Xaa-Pro-Lys N-methyltransferase 1</fullName>
        <ecNumber evidence="1">2.1.1.244</ecNumber>
    </recommendedName>
    <alternativeName>
        <fullName>Alpha N-terminal protein methyltransferase 1A</fullName>
    </alternativeName>
    <alternativeName>
        <fullName>Methyltransferase-like protein 11A</fullName>
    </alternativeName>
    <alternativeName>
        <fullName>X-Pro-Lys N-terminal protein methyltransferase 1A</fullName>
        <shortName>NTM1A</shortName>
    </alternativeName>
    <component>
        <recommendedName>
            <fullName>N-terminal Xaa-Pro-Lys N-methyltransferase 1, N-terminally processed</fullName>
        </recommendedName>
    </component>
</protein>
<dbReference type="EC" id="2.1.1.244" evidence="1"/>
<dbReference type="EMBL" id="BC091294">
    <property type="protein sequence ID" value="AAH91294.1"/>
    <property type="molecule type" value="mRNA"/>
</dbReference>
<dbReference type="RefSeq" id="NP_001020190.1">
    <property type="nucleotide sequence ID" value="NM_001025019.1"/>
</dbReference>
<dbReference type="RefSeq" id="XP_008759892.1">
    <property type="nucleotide sequence ID" value="XM_008761670.4"/>
</dbReference>
<dbReference type="RefSeq" id="XP_038961298.1">
    <property type="nucleotide sequence ID" value="XM_039105370.2"/>
</dbReference>
<dbReference type="RefSeq" id="XP_038961299.1">
    <property type="nucleotide sequence ID" value="XM_039105371.2"/>
</dbReference>
<dbReference type="SMR" id="Q5BJX0"/>
<dbReference type="FunCoup" id="Q5BJX0">
    <property type="interactions" value="1963"/>
</dbReference>
<dbReference type="STRING" id="10116.ENSRNOP00000035921"/>
<dbReference type="PhosphoSitePlus" id="Q5BJX0"/>
<dbReference type="jPOST" id="Q5BJX0"/>
<dbReference type="PaxDb" id="10116-ENSRNOP00000035921"/>
<dbReference type="Ensembl" id="ENSRNOT00000035805.7">
    <property type="protein sequence ID" value="ENSRNOP00000035921.4"/>
    <property type="gene ID" value="ENSRNOG00000024809.7"/>
</dbReference>
<dbReference type="GeneID" id="362103"/>
<dbReference type="KEGG" id="rno:362103"/>
<dbReference type="UCSC" id="RGD:1306582">
    <property type="organism name" value="rat"/>
</dbReference>
<dbReference type="AGR" id="RGD:1306582"/>
<dbReference type="CTD" id="28989"/>
<dbReference type="RGD" id="1306582">
    <property type="gene designation" value="Ntmt1"/>
</dbReference>
<dbReference type="eggNOG" id="KOG3178">
    <property type="taxonomic scope" value="Eukaryota"/>
</dbReference>
<dbReference type="GeneTree" id="ENSGT00390000008371"/>
<dbReference type="HOGENOM" id="CLU_055356_3_1_1"/>
<dbReference type="InParanoid" id="Q5BJX0"/>
<dbReference type="OrthoDB" id="1298661at2759"/>
<dbReference type="PhylomeDB" id="Q5BJX0"/>
<dbReference type="TreeFam" id="TF314174"/>
<dbReference type="PRO" id="PR:Q5BJX0"/>
<dbReference type="Proteomes" id="UP000002494">
    <property type="component" value="Chromosome 3"/>
</dbReference>
<dbReference type="Bgee" id="ENSRNOG00000024809">
    <property type="expression patterns" value="Expressed in quadriceps femoris and 20 other cell types or tissues"/>
</dbReference>
<dbReference type="GO" id="GO:0005737">
    <property type="term" value="C:cytoplasm"/>
    <property type="evidence" value="ECO:0000318"/>
    <property type="project" value="GO_Central"/>
</dbReference>
<dbReference type="GO" id="GO:0005634">
    <property type="term" value="C:nucleus"/>
    <property type="evidence" value="ECO:0000250"/>
    <property type="project" value="UniProtKB"/>
</dbReference>
<dbReference type="GO" id="GO:0042054">
    <property type="term" value="F:histone methyltransferase activity"/>
    <property type="evidence" value="ECO:0000250"/>
    <property type="project" value="UniProtKB"/>
</dbReference>
<dbReference type="GO" id="GO:0071885">
    <property type="term" value="F:N-terminal protein N-methyltransferase activity"/>
    <property type="evidence" value="ECO:0000250"/>
    <property type="project" value="UniProtKB"/>
</dbReference>
<dbReference type="GO" id="GO:0008276">
    <property type="term" value="F:protein methyltransferase activity"/>
    <property type="evidence" value="ECO:0000250"/>
    <property type="project" value="UniProtKB"/>
</dbReference>
<dbReference type="GO" id="GO:0007059">
    <property type="term" value="P:chromosome segregation"/>
    <property type="evidence" value="ECO:0000250"/>
    <property type="project" value="UniProtKB"/>
</dbReference>
<dbReference type="GO" id="GO:0018013">
    <property type="term" value="P:N-terminal peptidyl-glycine methylation"/>
    <property type="evidence" value="ECO:0000250"/>
    <property type="project" value="UniProtKB"/>
</dbReference>
<dbReference type="GO" id="GO:0018016">
    <property type="term" value="P:N-terminal peptidyl-proline dimethylation"/>
    <property type="evidence" value="ECO:0000250"/>
    <property type="project" value="UniProtKB"/>
</dbReference>
<dbReference type="GO" id="GO:0035572">
    <property type="term" value="P:N-terminal peptidyl-serine dimethylation"/>
    <property type="evidence" value="ECO:0000250"/>
    <property type="project" value="UniProtKB"/>
</dbReference>
<dbReference type="GO" id="GO:0035573">
    <property type="term" value="P:N-terminal peptidyl-serine trimethylation"/>
    <property type="evidence" value="ECO:0000250"/>
    <property type="project" value="UniProtKB"/>
</dbReference>
<dbReference type="GO" id="GO:0007051">
    <property type="term" value="P:spindle organization"/>
    <property type="evidence" value="ECO:0000250"/>
    <property type="project" value="UniProtKB"/>
</dbReference>
<dbReference type="CDD" id="cd02440">
    <property type="entry name" value="AdoMet_MTases"/>
    <property type="match status" value="1"/>
</dbReference>
<dbReference type="FunFam" id="3.40.50.150:FF:000025">
    <property type="entry name" value="N-terminal Xaa-Pro-Lys N-methyltransferase 1"/>
    <property type="match status" value="1"/>
</dbReference>
<dbReference type="Gene3D" id="3.40.50.150">
    <property type="entry name" value="Vaccinia Virus protein VP39"/>
    <property type="match status" value="1"/>
</dbReference>
<dbReference type="InterPro" id="IPR008576">
    <property type="entry name" value="MeTrfase_NTM1"/>
</dbReference>
<dbReference type="InterPro" id="IPR029063">
    <property type="entry name" value="SAM-dependent_MTases_sf"/>
</dbReference>
<dbReference type="PANTHER" id="PTHR12753">
    <property type="entry name" value="AD-003 - RELATED"/>
    <property type="match status" value="1"/>
</dbReference>
<dbReference type="PANTHER" id="PTHR12753:SF1">
    <property type="entry name" value="N-TERMINAL XAA-PRO-LYS N-METHYLTRANSFERASE 1"/>
    <property type="match status" value="1"/>
</dbReference>
<dbReference type="Pfam" id="PF05891">
    <property type="entry name" value="Methyltransf_PK"/>
    <property type="match status" value="1"/>
</dbReference>
<dbReference type="PIRSF" id="PIRSF016958">
    <property type="entry name" value="DUF858_MeTrfase_lik"/>
    <property type="match status" value="1"/>
</dbReference>
<dbReference type="SUPFAM" id="SSF53335">
    <property type="entry name" value="S-adenosyl-L-methionine-dependent methyltransferases"/>
    <property type="match status" value="1"/>
</dbReference>
<accession>Q5BJX0</accession>
<gene>
    <name type="primary">Ntmt1</name>
    <name type="synonym">Mettl11a</name>
</gene>
<name>NTM1A_RAT</name>
<reference key="1">
    <citation type="journal article" date="2004" name="Genome Res.">
        <title>The status, quality, and expansion of the NIH full-length cDNA project: the Mammalian Gene Collection (MGC).</title>
        <authorList>
            <consortium name="The MGC Project Team"/>
        </authorList>
    </citation>
    <scope>NUCLEOTIDE SEQUENCE [LARGE SCALE MRNA]</scope>
    <source>
        <tissue>Ovary</tissue>
    </source>
</reference>
<keyword id="KW-0007">Acetylation</keyword>
<keyword id="KW-0489">Methyltransferase</keyword>
<keyword id="KW-0539">Nucleus</keyword>
<keyword id="KW-1185">Reference proteome</keyword>
<keyword id="KW-0949">S-adenosyl-L-methionine</keyword>
<keyword id="KW-0808">Transferase</keyword>
<sequence>MTSEVIEDEKQFYSKAKTYWKQIPPTVDGMLGGYGHISNIDLNSSRKFLQRFLREGPNKTGTSCALDCGAGIGRITKRLLLPLFRVVDMVDVTEDFLAKAKTYLGEEGKRVRNYFCCGLQDFSPEPSSYDVIWIQWVIGHLTDQHLAEFLRRCRRGLRPNGIIVIKDNMAQEGVILDDVDSSVCRDLEVVRRIIRSAGLSLLAEERQENLPDEIYHVYSFALR</sequence>
<proteinExistence type="evidence at transcript level"/>
<organism>
    <name type="scientific">Rattus norvegicus</name>
    <name type="common">Rat</name>
    <dbReference type="NCBI Taxonomy" id="10116"/>
    <lineage>
        <taxon>Eukaryota</taxon>
        <taxon>Metazoa</taxon>
        <taxon>Chordata</taxon>
        <taxon>Craniata</taxon>
        <taxon>Vertebrata</taxon>
        <taxon>Euteleostomi</taxon>
        <taxon>Mammalia</taxon>
        <taxon>Eutheria</taxon>
        <taxon>Euarchontoglires</taxon>
        <taxon>Glires</taxon>
        <taxon>Rodentia</taxon>
        <taxon>Myomorpha</taxon>
        <taxon>Muroidea</taxon>
        <taxon>Muridae</taxon>
        <taxon>Murinae</taxon>
        <taxon>Rattus</taxon>
    </lineage>
</organism>
<comment type="function">
    <text evidence="1">Distributive alpha-N-methyltransferase that methylates the N-terminus of target proteins containing the N-terminal motif [Ala/Gly/Pro/Ser]-Pro-Lys when the initiator Met is cleaved. Specifically catalyzes mono-, di- or tri-methylation of the exposed alpha-amino group of the Ala, Gly or Ser residue in the [Ala/Gly/Ser]-Pro-Lys motif and mono- or di-methylation of Pro in the Pro-Pro-Lys motif. Some of the substrates may be primed by NTMT2-mediated monomethylation. Catalyzes the trimethylation of the N-terminal Gly in CENPA (after removal of Met-1). Responsible for the N-terminal methylation of KLHL31, MYL2, MYL3, RB1, RCC1, RPL23A and SET. Required during mitosis for normal bipolar spindle formation and chromosome segregation via its action on RCC1.</text>
</comment>
<comment type="catalytic activity">
    <reaction evidence="1">
        <text>N-terminal L-alanyl-L-prolyl-L-lysyl-[protein] + 3 S-adenosyl-L-methionine = N-terminal N,N,N-trimethyl-L-alanyl-L-prolyl-L-lysyl-[protein] + 3 S-adenosyl-L-homocysteine + 3 H(+)</text>
        <dbReference type="Rhea" id="RHEA:54712"/>
        <dbReference type="Rhea" id="RHEA-COMP:13785"/>
        <dbReference type="Rhea" id="RHEA-COMP:13971"/>
        <dbReference type="ChEBI" id="CHEBI:15378"/>
        <dbReference type="ChEBI" id="CHEBI:57856"/>
        <dbReference type="ChEBI" id="CHEBI:59789"/>
        <dbReference type="ChEBI" id="CHEBI:138057"/>
        <dbReference type="ChEBI" id="CHEBI:138315"/>
        <dbReference type="EC" id="2.1.1.244"/>
    </reaction>
</comment>
<comment type="catalytic activity">
    <reaction evidence="1">
        <text>N-terminal L-seryl-L-prolyl-L-lysyl-[protein] + 3 S-adenosyl-L-methionine = N-terminal N,N,N-trimethyl-L-seryl-L-prolyl-L-lysyl-[protein] + 3 S-adenosyl-L-homocysteine + 3 H(+)</text>
        <dbReference type="Rhea" id="RHEA:54724"/>
        <dbReference type="Rhea" id="RHEA-COMP:13789"/>
        <dbReference type="Rhea" id="RHEA-COMP:13973"/>
        <dbReference type="ChEBI" id="CHEBI:15378"/>
        <dbReference type="ChEBI" id="CHEBI:57856"/>
        <dbReference type="ChEBI" id="CHEBI:59789"/>
        <dbReference type="ChEBI" id="CHEBI:138061"/>
        <dbReference type="ChEBI" id="CHEBI:138317"/>
        <dbReference type="EC" id="2.1.1.244"/>
    </reaction>
</comment>
<comment type="catalytic activity">
    <reaction evidence="1">
        <text>N-terminal L-prolyl-L-prolyl-L-lysyl-[protein] + 2 S-adenosyl-L-methionine = N-terminal N,N-dimethyl-L-prolyl-L-prolyl-L-lysyl-[protein] + 2 S-adenosyl-L-homocysteine + 2 H(+)</text>
        <dbReference type="Rhea" id="RHEA:54736"/>
        <dbReference type="Rhea" id="RHEA-COMP:13787"/>
        <dbReference type="Rhea" id="RHEA-COMP:13974"/>
        <dbReference type="ChEBI" id="CHEBI:15378"/>
        <dbReference type="ChEBI" id="CHEBI:57856"/>
        <dbReference type="ChEBI" id="CHEBI:59789"/>
        <dbReference type="ChEBI" id="CHEBI:138059"/>
        <dbReference type="ChEBI" id="CHEBI:138318"/>
        <dbReference type="EC" id="2.1.1.244"/>
    </reaction>
</comment>
<comment type="subcellular location">
    <subcellularLocation>
        <location evidence="1">Nucleus</location>
    </subcellularLocation>
    <text evidence="1">Predominantly nuclear.</text>
</comment>
<comment type="similarity">
    <text evidence="2">Belongs to the methyltransferase superfamily. NTM1 family.</text>
</comment>
<evidence type="ECO:0000250" key="1">
    <source>
        <dbReference type="UniProtKB" id="Q9BV86"/>
    </source>
</evidence>
<evidence type="ECO:0000305" key="2"/>
<feature type="chain" id="PRO_0000423230" description="N-terminal Xaa-Pro-Lys N-methyltransferase 1">
    <location>
        <begin position="1"/>
        <end position="223"/>
    </location>
</feature>
<feature type="initiator methionine" description="Removed; alternate" evidence="1">
    <location>
        <position position="1"/>
    </location>
</feature>
<feature type="chain" id="PRO_0000119290" description="N-terminal Xaa-Pro-Lys N-methyltransferase 1, N-terminally processed">
    <location>
        <begin position="2"/>
        <end position="223"/>
    </location>
</feature>
<feature type="binding site" evidence="1">
    <location>
        <position position="69"/>
    </location>
    <ligand>
        <name>S-adenosyl-L-methionine</name>
        <dbReference type="ChEBI" id="CHEBI:59789"/>
    </ligand>
</feature>
<feature type="binding site" evidence="1">
    <location>
        <position position="74"/>
    </location>
    <ligand>
        <name>S-adenosyl-L-methionine</name>
        <dbReference type="ChEBI" id="CHEBI:59789"/>
    </ligand>
</feature>
<feature type="binding site" evidence="1">
    <location>
        <begin position="91"/>
        <end position="93"/>
    </location>
    <ligand>
        <name>S-adenosyl-L-methionine</name>
        <dbReference type="ChEBI" id="CHEBI:59789"/>
    </ligand>
</feature>
<feature type="binding site" evidence="1">
    <location>
        <begin position="119"/>
        <end position="120"/>
    </location>
    <ligand>
        <name>S-adenosyl-L-methionine</name>
        <dbReference type="ChEBI" id="CHEBI:59789"/>
    </ligand>
</feature>
<feature type="binding site" evidence="1">
    <location>
        <position position="135"/>
    </location>
    <ligand>
        <name>S-adenosyl-L-methionine</name>
        <dbReference type="ChEBI" id="CHEBI:59789"/>
    </ligand>
</feature>
<feature type="modified residue" description="N-acetylmethionine" evidence="1">
    <location>
        <position position="1"/>
    </location>
</feature>
<feature type="modified residue" description="N-acetylthreonine; in N-terminal Xaa-Pro-Lys N-methyltransferase 1, N-terminally processed" evidence="1">
    <location>
        <position position="2"/>
    </location>
</feature>